<sequence>MKAIFVLKGWWRTS</sequence>
<dbReference type="EMBL" id="AE005674">
    <property type="protein sequence ID" value="AAN42881.1"/>
    <property type="molecule type" value="Genomic_DNA"/>
</dbReference>
<dbReference type="EMBL" id="AE014073">
    <property type="protein sequence ID" value="AAP16766.1"/>
    <property type="molecule type" value="Genomic_DNA"/>
</dbReference>
<dbReference type="RefSeq" id="WP_001700591.1">
    <property type="nucleotide sequence ID" value="NZ_WPGW01000009.1"/>
</dbReference>
<dbReference type="STRING" id="198214.SF1268"/>
<dbReference type="GeneID" id="89516133"/>
<dbReference type="KEGG" id="sfx:S4805"/>
<dbReference type="HOGENOM" id="CLU_222400_0_0_6"/>
<dbReference type="Proteomes" id="UP000001006">
    <property type="component" value="Chromosome"/>
</dbReference>
<dbReference type="Proteomes" id="UP000002673">
    <property type="component" value="Chromosome"/>
</dbReference>
<dbReference type="GO" id="GO:0000162">
    <property type="term" value="P:L-tryptophan biosynthetic process"/>
    <property type="evidence" value="ECO:0007669"/>
    <property type="project" value="UniProtKB-KW"/>
</dbReference>
<dbReference type="InterPro" id="IPR013205">
    <property type="entry name" value="Leader_Trp_op"/>
</dbReference>
<dbReference type="Pfam" id="PF08255">
    <property type="entry name" value="Leader_Trp"/>
    <property type="match status" value="1"/>
</dbReference>
<evidence type="ECO:0000250" key="1"/>
<gene>
    <name type="primary">trpL</name>
    <name type="ordered locus">SF1268</name>
    <name type="ordered locus">S4805</name>
</gene>
<name>LPW_SHIFL</name>
<feature type="peptide" id="PRO_0000044029" description="trp operon leader peptide">
    <location>
        <begin position="1"/>
        <end position="14"/>
    </location>
</feature>
<accession>P0AD95</accession>
<accession>P03053</accession>
<organism>
    <name type="scientific">Shigella flexneri</name>
    <dbReference type="NCBI Taxonomy" id="623"/>
    <lineage>
        <taxon>Bacteria</taxon>
        <taxon>Pseudomonadati</taxon>
        <taxon>Pseudomonadota</taxon>
        <taxon>Gammaproteobacteria</taxon>
        <taxon>Enterobacterales</taxon>
        <taxon>Enterobacteriaceae</taxon>
        <taxon>Shigella</taxon>
    </lineage>
</organism>
<comment type="function">
    <text evidence="1">This protein is involved in control of the biosynthesis of tryptophan.</text>
</comment>
<reference key="1">
    <citation type="journal article" date="2002" name="Nucleic Acids Res.">
        <title>Genome sequence of Shigella flexneri 2a: insights into pathogenicity through comparison with genomes of Escherichia coli K12 and O157.</title>
        <authorList>
            <person name="Jin Q."/>
            <person name="Yuan Z."/>
            <person name="Xu J."/>
            <person name="Wang Y."/>
            <person name="Shen Y."/>
            <person name="Lu W."/>
            <person name="Wang J."/>
            <person name="Liu H."/>
            <person name="Yang J."/>
            <person name="Yang F."/>
            <person name="Zhang X."/>
            <person name="Zhang J."/>
            <person name="Yang G."/>
            <person name="Wu H."/>
            <person name="Qu D."/>
            <person name="Dong J."/>
            <person name="Sun L."/>
            <person name="Xue Y."/>
            <person name="Zhao A."/>
            <person name="Gao Y."/>
            <person name="Zhu J."/>
            <person name="Kan B."/>
            <person name="Ding K."/>
            <person name="Chen S."/>
            <person name="Cheng H."/>
            <person name="Yao Z."/>
            <person name="He B."/>
            <person name="Chen R."/>
            <person name="Ma D."/>
            <person name="Qiang B."/>
            <person name="Wen Y."/>
            <person name="Hou Y."/>
            <person name="Yu J."/>
        </authorList>
    </citation>
    <scope>NUCLEOTIDE SEQUENCE [LARGE SCALE GENOMIC DNA]</scope>
    <source>
        <strain>301 / Serotype 2a</strain>
    </source>
</reference>
<reference key="2">
    <citation type="journal article" date="2003" name="Infect. Immun.">
        <title>Complete genome sequence and comparative genomics of Shigella flexneri serotype 2a strain 2457T.</title>
        <authorList>
            <person name="Wei J."/>
            <person name="Goldberg M.B."/>
            <person name="Burland V."/>
            <person name="Venkatesan M.M."/>
            <person name="Deng W."/>
            <person name="Fournier G."/>
            <person name="Mayhew G.F."/>
            <person name="Plunkett G. III"/>
            <person name="Rose D.J."/>
            <person name="Darling A."/>
            <person name="Mau B."/>
            <person name="Perna N.T."/>
            <person name="Payne S.M."/>
            <person name="Runyen-Janecky L.J."/>
            <person name="Zhou S."/>
            <person name="Schwartz D.C."/>
            <person name="Blattner F.R."/>
        </authorList>
    </citation>
    <scope>NUCLEOTIDE SEQUENCE [LARGE SCALE GENOMIC DNA]</scope>
    <source>
        <strain>ATCC 700930 / 2457T / Serotype 2a</strain>
    </source>
</reference>
<protein>
    <recommendedName>
        <fullName>trp operon leader peptide</fullName>
    </recommendedName>
</protein>
<proteinExistence type="inferred from homology"/>
<keyword id="KW-0028">Amino-acid biosynthesis</keyword>
<keyword id="KW-0057">Aromatic amino acid biosynthesis</keyword>
<keyword id="KW-0428">Leader peptide</keyword>
<keyword id="KW-1185">Reference proteome</keyword>
<keyword id="KW-0822">Tryptophan biosynthesis</keyword>